<feature type="chain" id="PRO_1000094562" description="3-dehydroquinate synthase">
    <location>
        <begin position="1"/>
        <end position="363"/>
    </location>
</feature>
<feature type="binding site" evidence="1">
    <location>
        <begin position="134"/>
        <end position="135"/>
    </location>
    <ligand>
        <name>NAD(+)</name>
        <dbReference type="ChEBI" id="CHEBI:57540"/>
    </ligand>
</feature>
<feature type="binding site" evidence="1">
    <location>
        <position position="147"/>
    </location>
    <ligand>
        <name>NAD(+)</name>
        <dbReference type="ChEBI" id="CHEBI:57540"/>
    </ligand>
</feature>
<feature type="binding site" evidence="1">
    <location>
        <position position="156"/>
    </location>
    <ligand>
        <name>NAD(+)</name>
        <dbReference type="ChEBI" id="CHEBI:57540"/>
    </ligand>
</feature>
<feature type="binding site" evidence="1">
    <location>
        <position position="189"/>
    </location>
    <ligand>
        <name>Zn(2+)</name>
        <dbReference type="ChEBI" id="CHEBI:29105"/>
    </ligand>
</feature>
<feature type="binding site" evidence="1">
    <location>
        <position position="254"/>
    </location>
    <ligand>
        <name>Zn(2+)</name>
        <dbReference type="ChEBI" id="CHEBI:29105"/>
    </ligand>
</feature>
<feature type="binding site" evidence="1">
    <location>
        <position position="271"/>
    </location>
    <ligand>
        <name>Zn(2+)</name>
        <dbReference type="ChEBI" id="CHEBI:29105"/>
    </ligand>
</feature>
<proteinExistence type="inferred from homology"/>
<protein>
    <recommendedName>
        <fullName evidence="1">3-dehydroquinate synthase</fullName>
        <shortName evidence="1">DHQS</shortName>
        <ecNumber evidence="1">4.2.3.4</ecNumber>
    </recommendedName>
</protein>
<evidence type="ECO:0000255" key="1">
    <source>
        <dbReference type="HAMAP-Rule" id="MF_00110"/>
    </source>
</evidence>
<dbReference type="EC" id="4.2.3.4" evidence="1"/>
<dbReference type="EMBL" id="CP000825">
    <property type="protein sequence ID" value="ABV50382.1"/>
    <property type="molecule type" value="Genomic_DNA"/>
</dbReference>
<dbReference type="RefSeq" id="WP_012007498.1">
    <property type="nucleotide sequence ID" value="NC_009840.1"/>
</dbReference>
<dbReference type="SMR" id="A8G451"/>
<dbReference type="STRING" id="93060.P9215_07671"/>
<dbReference type="KEGG" id="pmh:P9215_07671"/>
<dbReference type="eggNOG" id="COG0337">
    <property type="taxonomic scope" value="Bacteria"/>
</dbReference>
<dbReference type="HOGENOM" id="CLU_001201_0_2_3"/>
<dbReference type="OrthoDB" id="9806583at2"/>
<dbReference type="UniPathway" id="UPA00053">
    <property type="reaction ID" value="UER00085"/>
</dbReference>
<dbReference type="Proteomes" id="UP000002014">
    <property type="component" value="Chromosome"/>
</dbReference>
<dbReference type="GO" id="GO:0005737">
    <property type="term" value="C:cytoplasm"/>
    <property type="evidence" value="ECO:0007669"/>
    <property type="project" value="UniProtKB-SubCell"/>
</dbReference>
<dbReference type="GO" id="GO:0003856">
    <property type="term" value="F:3-dehydroquinate synthase activity"/>
    <property type="evidence" value="ECO:0007669"/>
    <property type="project" value="UniProtKB-UniRule"/>
</dbReference>
<dbReference type="GO" id="GO:0046872">
    <property type="term" value="F:metal ion binding"/>
    <property type="evidence" value="ECO:0007669"/>
    <property type="project" value="UniProtKB-KW"/>
</dbReference>
<dbReference type="GO" id="GO:0000166">
    <property type="term" value="F:nucleotide binding"/>
    <property type="evidence" value="ECO:0007669"/>
    <property type="project" value="UniProtKB-KW"/>
</dbReference>
<dbReference type="GO" id="GO:0008652">
    <property type="term" value="P:amino acid biosynthetic process"/>
    <property type="evidence" value="ECO:0007669"/>
    <property type="project" value="UniProtKB-KW"/>
</dbReference>
<dbReference type="GO" id="GO:0009073">
    <property type="term" value="P:aromatic amino acid family biosynthetic process"/>
    <property type="evidence" value="ECO:0007669"/>
    <property type="project" value="UniProtKB-KW"/>
</dbReference>
<dbReference type="GO" id="GO:0009423">
    <property type="term" value="P:chorismate biosynthetic process"/>
    <property type="evidence" value="ECO:0007669"/>
    <property type="project" value="UniProtKB-UniRule"/>
</dbReference>
<dbReference type="CDD" id="cd08195">
    <property type="entry name" value="DHQS"/>
    <property type="match status" value="1"/>
</dbReference>
<dbReference type="FunFam" id="3.40.50.1970:FF:000001">
    <property type="entry name" value="3-dehydroquinate synthase"/>
    <property type="match status" value="1"/>
</dbReference>
<dbReference type="Gene3D" id="3.40.50.1970">
    <property type="match status" value="1"/>
</dbReference>
<dbReference type="Gene3D" id="1.20.1090.10">
    <property type="entry name" value="Dehydroquinate synthase-like - alpha domain"/>
    <property type="match status" value="1"/>
</dbReference>
<dbReference type="HAMAP" id="MF_00110">
    <property type="entry name" value="DHQ_synthase"/>
    <property type="match status" value="1"/>
</dbReference>
<dbReference type="InterPro" id="IPR050071">
    <property type="entry name" value="Dehydroquinate_synthase"/>
</dbReference>
<dbReference type="InterPro" id="IPR016037">
    <property type="entry name" value="DHQ_synth_AroB"/>
</dbReference>
<dbReference type="InterPro" id="IPR030963">
    <property type="entry name" value="DHQ_synth_fam"/>
</dbReference>
<dbReference type="InterPro" id="IPR030960">
    <property type="entry name" value="DHQS/DOIS_N"/>
</dbReference>
<dbReference type="InterPro" id="IPR056179">
    <property type="entry name" value="DHQS_C"/>
</dbReference>
<dbReference type="NCBIfam" id="TIGR01357">
    <property type="entry name" value="aroB"/>
    <property type="match status" value="1"/>
</dbReference>
<dbReference type="PANTHER" id="PTHR43622">
    <property type="entry name" value="3-DEHYDROQUINATE SYNTHASE"/>
    <property type="match status" value="1"/>
</dbReference>
<dbReference type="PANTHER" id="PTHR43622:SF7">
    <property type="entry name" value="3-DEHYDROQUINATE SYNTHASE, CHLOROPLASTIC"/>
    <property type="match status" value="1"/>
</dbReference>
<dbReference type="Pfam" id="PF01761">
    <property type="entry name" value="DHQ_synthase"/>
    <property type="match status" value="1"/>
</dbReference>
<dbReference type="Pfam" id="PF24621">
    <property type="entry name" value="DHQS_C"/>
    <property type="match status" value="1"/>
</dbReference>
<dbReference type="PIRSF" id="PIRSF001455">
    <property type="entry name" value="DHQ_synth"/>
    <property type="match status" value="1"/>
</dbReference>
<dbReference type="SUPFAM" id="SSF56796">
    <property type="entry name" value="Dehydroquinate synthase-like"/>
    <property type="match status" value="1"/>
</dbReference>
<gene>
    <name evidence="1" type="primary">aroB</name>
    <name type="ordered locus">P9215_07671</name>
</gene>
<organism>
    <name type="scientific">Prochlorococcus marinus (strain MIT 9215)</name>
    <dbReference type="NCBI Taxonomy" id="93060"/>
    <lineage>
        <taxon>Bacteria</taxon>
        <taxon>Bacillati</taxon>
        <taxon>Cyanobacteriota</taxon>
        <taxon>Cyanophyceae</taxon>
        <taxon>Synechococcales</taxon>
        <taxon>Prochlorococcaceae</taxon>
        <taxon>Prochlorococcus</taxon>
    </lineage>
</organism>
<keyword id="KW-0028">Amino-acid biosynthesis</keyword>
<keyword id="KW-0057">Aromatic amino acid biosynthesis</keyword>
<keyword id="KW-0170">Cobalt</keyword>
<keyword id="KW-0963">Cytoplasm</keyword>
<keyword id="KW-0456">Lyase</keyword>
<keyword id="KW-0479">Metal-binding</keyword>
<keyword id="KW-0520">NAD</keyword>
<keyword id="KW-0547">Nucleotide-binding</keyword>
<keyword id="KW-0862">Zinc</keyword>
<accession>A8G451</accession>
<comment type="function">
    <text evidence="1">Catalyzes the conversion of 3-deoxy-D-arabino-heptulosonate 7-phosphate (DAHP) to dehydroquinate (DHQ).</text>
</comment>
<comment type="catalytic activity">
    <reaction evidence="1">
        <text>7-phospho-2-dehydro-3-deoxy-D-arabino-heptonate = 3-dehydroquinate + phosphate</text>
        <dbReference type="Rhea" id="RHEA:21968"/>
        <dbReference type="ChEBI" id="CHEBI:32364"/>
        <dbReference type="ChEBI" id="CHEBI:43474"/>
        <dbReference type="ChEBI" id="CHEBI:58394"/>
        <dbReference type="EC" id="4.2.3.4"/>
    </reaction>
</comment>
<comment type="cofactor">
    <cofactor evidence="1">
        <name>Co(2+)</name>
        <dbReference type="ChEBI" id="CHEBI:48828"/>
    </cofactor>
    <cofactor evidence="1">
        <name>Zn(2+)</name>
        <dbReference type="ChEBI" id="CHEBI:29105"/>
    </cofactor>
    <text evidence="1">Binds 1 divalent metal cation per subunit. Can use either Co(2+) or Zn(2+).</text>
</comment>
<comment type="cofactor">
    <cofactor evidence="1">
        <name>NAD(+)</name>
        <dbReference type="ChEBI" id="CHEBI:57540"/>
    </cofactor>
</comment>
<comment type="pathway">
    <text evidence="1">Metabolic intermediate biosynthesis; chorismate biosynthesis; chorismate from D-erythrose 4-phosphate and phosphoenolpyruvate: step 2/7.</text>
</comment>
<comment type="subcellular location">
    <subcellularLocation>
        <location evidence="1">Cytoplasm</location>
    </subcellularLocation>
</comment>
<comment type="similarity">
    <text evidence="1">Belongs to the sugar phosphate cyclases superfamily. Dehydroquinate synthase family.</text>
</comment>
<sequence length="363" mass="40733">MNKRKILVPLGEKSYEVTLEAGILNNISEELLKIGITKKRKILVISNEEISNLYGKKFLNNLKDNKFQAKMFLIKAGESYKNLKTLSEIYDVAFEFGLDRNSIIIALGGGIVGDVSGFAAATWLRGIEYIQIPTTLLSMVDSSVGGKTGVNHPKGKNLIGAFNQPKAVFIDPETLKSLPKREFSAGMAEVIKYGVIRDKELFEYLEIDKNKNELINLKNEYLIKIINSSIKTKSHVVSQDEHENGVRAILNYGHSFGHVIENLCGYGKFLHGEAISIGMNIAGKIAIEKGLWSKEELERQRVLLESYDLPTEIPKINKEDVLTILMGDKKVRDGKMRFILPKEIGAVDIYDDVEDSLFLKFFS</sequence>
<reference key="1">
    <citation type="journal article" date="2007" name="PLoS Genet.">
        <title>Patterns and implications of gene gain and loss in the evolution of Prochlorococcus.</title>
        <authorList>
            <person name="Kettler G.C."/>
            <person name="Martiny A.C."/>
            <person name="Huang K."/>
            <person name="Zucker J."/>
            <person name="Coleman M.L."/>
            <person name="Rodrigue S."/>
            <person name="Chen F."/>
            <person name="Lapidus A."/>
            <person name="Ferriera S."/>
            <person name="Johnson J."/>
            <person name="Steglich C."/>
            <person name="Church G.M."/>
            <person name="Richardson P."/>
            <person name="Chisholm S.W."/>
        </authorList>
    </citation>
    <scope>NUCLEOTIDE SEQUENCE [LARGE SCALE GENOMIC DNA]</scope>
    <source>
        <strain>MIT 9215</strain>
    </source>
</reference>
<name>AROB_PROM2</name>